<protein>
    <recommendedName>
        <fullName evidence="6">Homocitrate synthase</fullName>
        <shortName evidence="6">HCS</shortName>
        <ecNumber evidence="4">2.3.3.14</ecNumber>
    </recommendedName>
</protein>
<accession>O87198</accession>
<proteinExistence type="evidence at protein level"/>
<reference key="1">
    <citation type="journal article" date="1998" name="FEMS Microbiol. Lett.">
        <title>Lysine is synthesized through the alpha-aminoadipate pathway in Thermus thermophilus.</title>
        <authorList>
            <person name="Kosuge T."/>
            <person name="Hoshino T."/>
        </authorList>
    </citation>
    <scope>NUCLEOTIDE SEQUENCE [GENOMIC DNA]</scope>
    <scope>FUNCTION</scope>
    <scope>DISRUPTION PHENOTYPE</scope>
    <scope>PATHWAY</scope>
    <source>
        <strain>ATCC BAA-163 / DSM 7039 / HB27</strain>
    </source>
</reference>
<reference key="2">
    <citation type="journal article" date="2004" name="Nat. Biotechnol.">
        <title>The genome sequence of the extreme thermophile Thermus thermophilus.</title>
        <authorList>
            <person name="Henne A."/>
            <person name="Brueggemann H."/>
            <person name="Raasch C."/>
            <person name="Wiezer A."/>
            <person name="Hartsch T."/>
            <person name="Liesegang H."/>
            <person name="Johann A."/>
            <person name="Lienard T."/>
            <person name="Gohl O."/>
            <person name="Martinez-Arias R."/>
            <person name="Jacobi C."/>
            <person name="Starkuviene V."/>
            <person name="Schlenczeck S."/>
            <person name="Dencker S."/>
            <person name="Huber R."/>
            <person name="Klenk H.-P."/>
            <person name="Kramer W."/>
            <person name="Merkl R."/>
            <person name="Gottschalk G."/>
            <person name="Fritz H.-J."/>
        </authorList>
    </citation>
    <scope>NUCLEOTIDE SEQUENCE [LARGE SCALE GENOMIC DNA]</scope>
    <source>
        <strain>ATCC BAA-163 / DSM 7039 / HB27</strain>
    </source>
</reference>
<reference key="3">
    <citation type="journal article" date="2002" name="FEBS Lett.">
        <title>Characterization of bacterial homocitrate synthase involved in lysine biosynthesis.</title>
        <authorList>
            <person name="Wulandari A.P."/>
            <person name="Miyazaki J."/>
            <person name="Kobashi N."/>
            <person name="Nishiyama M."/>
            <person name="Hoshino T."/>
            <person name="Yamane H."/>
        </authorList>
    </citation>
    <scope>FUNCTION</scope>
    <scope>CATALYTIC ACTIVITY</scope>
    <scope>SUBSTRATE SPECIFICITY</scope>
    <scope>BIOPHYSICOCHEMICAL PROPERTIES</scope>
    <scope>ACTIVITY REGULATION</scope>
    <scope>SUBUNIT</scope>
    <source>
        <strain>ATCC BAA-163 / DSM 7039 / HB27</strain>
    </source>
</reference>
<reference evidence="10 11 12 13" key="4">
    <citation type="journal article" date="2010" name="J. Biol. Chem.">
        <title>Mechanism of substrate recognition and insight into feedback inhibition of homocitrate synthase from Thermus thermophilus.</title>
        <authorList>
            <person name="Okada T."/>
            <person name="Tomita T."/>
            <person name="Wulandari A.P."/>
            <person name="Kuzuyama T."/>
            <person name="Nishiyama M."/>
        </authorList>
    </citation>
    <scope>X-RAY CRYSTALLOGRAPHY (1.80 ANGSTROMS) IN COMPLEXES WITH (2R)-HOMOCITRATE; 2-OXOGLUTARATE; COPPER; L-LYSINE AND MAGNESIUM</scope>
    <scope>FUNCTION</scope>
    <scope>CATALYTIC ACTIVITY</scope>
    <scope>BIOPHYSICOCHEMICAL PROPERTIES</scope>
    <scope>COFACTOR</scope>
    <scope>ACTIVITY REGULATION</scope>
    <scope>MUTAGENESIS OF HIS-72</scope>
    <scope>REACTION MECHANISM</scope>
    <scope>ACTIVE SITE</scope>
</reference>
<gene>
    <name evidence="7" type="primary">lys20</name>
    <name type="ordered locus">TT_C1550</name>
</gene>
<feature type="chain" id="PRO_0000140455" description="Homocitrate synthase">
    <location>
        <begin position="1"/>
        <end position="376"/>
    </location>
</feature>
<feature type="domain" description="Pyruvate carboxyltransferase" evidence="2">
    <location>
        <begin position="4"/>
        <end position="259"/>
    </location>
</feature>
<feature type="active site" description="Proton acceptor" evidence="9">
    <location>
        <position position="292"/>
    </location>
</feature>
<feature type="binding site" evidence="4 10 12">
    <location>
        <position position="12"/>
    </location>
    <ligand>
        <name>2-oxoglutarate</name>
        <dbReference type="ChEBI" id="CHEBI:16810"/>
    </ligand>
</feature>
<feature type="binding site" evidence="4 12">
    <location>
        <position position="13"/>
    </location>
    <ligand>
        <name>Mg(2+)</name>
        <dbReference type="ChEBI" id="CHEBI:18420"/>
    </ligand>
</feature>
<feature type="binding site" evidence="4 10 12">
    <location>
        <position position="72"/>
    </location>
    <ligand>
        <name>2-oxoglutarate</name>
        <dbReference type="ChEBI" id="CHEBI:16810"/>
    </ligand>
</feature>
<feature type="binding site" evidence="4 13">
    <location>
        <position position="92"/>
    </location>
    <ligand>
        <name>L-lysine</name>
        <dbReference type="ChEBI" id="CHEBI:32551"/>
        <note>inhibitor</note>
    </ligand>
</feature>
<feature type="binding site" evidence="4 10 12">
    <location>
        <position position="133"/>
    </location>
    <ligand>
        <name>2-oxoglutarate</name>
        <dbReference type="ChEBI" id="CHEBI:16810"/>
    </ligand>
</feature>
<feature type="binding site" evidence="4 13">
    <location>
        <position position="135"/>
    </location>
    <ligand>
        <name>L-lysine</name>
        <dbReference type="ChEBI" id="CHEBI:32551"/>
        <note>inhibitor</note>
    </ligand>
</feature>
<feature type="binding site" evidence="4 10 12">
    <location>
        <position position="166"/>
    </location>
    <ligand>
        <name>2-oxoglutarate</name>
        <dbReference type="ChEBI" id="CHEBI:16810"/>
    </ligand>
</feature>
<feature type="binding site" evidence="4 13">
    <location>
        <position position="166"/>
    </location>
    <ligand>
        <name>L-lysine</name>
        <dbReference type="ChEBI" id="CHEBI:32551"/>
        <note>inhibitor</note>
    </ligand>
</feature>
<feature type="binding site" evidence="4 12">
    <location>
        <position position="195"/>
    </location>
    <ligand>
        <name>Mg(2+)</name>
        <dbReference type="ChEBI" id="CHEBI:18420"/>
    </ligand>
</feature>
<feature type="binding site" evidence="4 12">
    <location>
        <position position="197"/>
    </location>
    <ligand>
        <name>Mg(2+)</name>
        <dbReference type="ChEBI" id="CHEBI:18420"/>
    </ligand>
</feature>
<feature type="mutagenesis site" description="Significant decrease in sensitivity to lysine inhibition. Large decrease in affinity for 2-oxoglutarate. Almost no effect on affinity for acetyl-CoA and on turnover number." evidence="4">
    <original>H</original>
    <variation>L</variation>
    <location>
        <position position="72"/>
    </location>
</feature>
<feature type="sequence conflict" description="In Ref. 1; BAA33785." evidence="8" ref="1">
    <original>A</original>
    <variation>P</variation>
    <location>
        <position position="104"/>
    </location>
</feature>
<feature type="strand" evidence="14">
    <location>
        <begin position="5"/>
        <end position="11"/>
    </location>
</feature>
<feature type="helix" evidence="14">
    <location>
        <begin position="13"/>
        <end position="16"/>
    </location>
</feature>
<feature type="helix" evidence="14">
    <location>
        <begin position="24"/>
        <end position="37"/>
    </location>
</feature>
<feature type="strand" evidence="14">
    <location>
        <begin position="40"/>
        <end position="44"/>
    </location>
</feature>
<feature type="helix" evidence="15">
    <location>
        <begin position="47"/>
        <end position="49"/>
    </location>
</feature>
<feature type="helix" evidence="14">
    <location>
        <begin position="51"/>
        <end position="61"/>
    </location>
</feature>
<feature type="strand" evidence="14">
    <location>
        <begin position="66"/>
        <end position="75"/>
    </location>
</feature>
<feature type="helix" evidence="14">
    <location>
        <begin position="77"/>
        <end position="85"/>
    </location>
</feature>
<feature type="strand" evidence="14">
    <location>
        <begin position="89"/>
        <end position="95"/>
    </location>
</feature>
<feature type="helix" evidence="14">
    <location>
        <begin position="109"/>
        <end position="126"/>
    </location>
</feature>
<feature type="strand" evidence="14">
    <location>
        <begin position="130"/>
        <end position="136"/>
    </location>
</feature>
<feature type="turn" evidence="14">
    <location>
        <begin position="137"/>
        <end position="141"/>
    </location>
</feature>
<feature type="helix" evidence="14">
    <location>
        <begin position="144"/>
        <end position="154"/>
    </location>
</feature>
<feature type="helix" evidence="14">
    <location>
        <begin position="155"/>
        <end position="157"/>
    </location>
</feature>
<feature type="strand" evidence="14">
    <location>
        <begin position="159"/>
        <end position="165"/>
    </location>
</feature>
<feature type="helix" evidence="14">
    <location>
        <begin position="172"/>
        <end position="186"/>
    </location>
</feature>
<feature type="turn" evidence="14">
    <location>
        <begin position="187"/>
        <end position="189"/>
    </location>
</feature>
<feature type="strand" evidence="14">
    <location>
        <begin position="190"/>
        <end position="197"/>
    </location>
</feature>
<feature type="helix" evidence="14">
    <location>
        <begin position="203"/>
        <end position="212"/>
    </location>
</feature>
<feature type="strand" evidence="14">
    <location>
        <begin position="217"/>
        <end position="221"/>
    </location>
</feature>
<feature type="helix" evidence="14">
    <location>
        <begin position="222"/>
        <end position="224"/>
    </location>
</feature>
<feature type="helix" evidence="14">
    <location>
        <begin position="234"/>
        <end position="244"/>
    </location>
</feature>
<feature type="helix" evidence="14">
    <location>
        <begin position="246"/>
        <end position="252"/>
    </location>
</feature>
<feature type="helix" evidence="14">
    <location>
        <begin position="255"/>
        <end position="257"/>
    </location>
</feature>
<feature type="helix" evidence="14">
    <location>
        <begin position="258"/>
        <end position="269"/>
    </location>
</feature>
<feature type="turn" evidence="14">
    <location>
        <begin position="278"/>
        <end position="280"/>
    </location>
</feature>
<feature type="turn" evidence="14">
    <location>
        <begin position="282"/>
        <end position="285"/>
    </location>
</feature>
<feature type="helix" evidence="14">
    <location>
        <begin position="290"/>
        <end position="298"/>
    </location>
</feature>
<feature type="helix" evidence="14">
    <location>
        <begin position="300"/>
        <end position="303"/>
    </location>
</feature>
<feature type="helix" evidence="14">
    <location>
        <begin position="308"/>
        <end position="311"/>
    </location>
</feature>
<feature type="helix" evidence="16">
    <location>
        <begin position="342"/>
        <end position="357"/>
    </location>
</feature>
<feature type="helix" evidence="16">
    <location>
        <begin position="363"/>
        <end position="374"/>
    </location>
</feature>
<dbReference type="EC" id="2.3.3.14" evidence="4"/>
<dbReference type="EMBL" id="AB018379">
    <property type="protein sequence ID" value="BAA33785.1"/>
    <property type="molecule type" value="Genomic_DNA"/>
</dbReference>
<dbReference type="EMBL" id="AE017221">
    <property type="protein sequence ID" value="AAS81892.1"/>
    <property type="molecule type" value="Genomic_DNA"/>
</dbReference>
<dbReference type="PIR" id="T51170">
    <property type="entry name" value="T51170"/>
</dbReference>
<dbReference type="RefSeq" id="WP_011173924.1">
    <property type="nucleotide sequence ID" value="NC_005835.1"/>
</dbReference>
<dbReference type="PDB" id="2ZTJ">
    <property type="method" value="X-ray"/>
    <property type="resolution" value="1.80 A"/>
    <property type="chains" value="A=1-376"/>
</dbReference>
<dbReference type="PDB" id="2ZTK">
    <property type="method" value="X-ray"/>
    <property type="resolution" value="1.96 A"/>
    <property type="chains" value="A=1-376"/>
</dbReference>
<dbReference type="PDB" id="2ZYF">
    <property type="method" value="X-ray"/>
    <property type="resolution" value="2.15 A"/>
    <property type="chains" value="A=1-376"/>
</dbReference>
<dbReference type="PDB" id="3A9I">
    <property type="method" value="X-ray"/>
    <property type="resolution" value="1.80 A"/>
    <property type="chains" value="A=1-376"/>
</dbReference>
<dbReference type="PDBsum" id="2ZTJ"/>
<dbReference type="PDBsum" id="2ZTK"/>
<dbReference type="PDBsum" id="2ZYF"/>
<dbReference type="PDBsum" id="3A9I"/>
<dbReference type="SMR" id="O87198"/>
<dbReference type="GeneID" id="3170147"/>
<dbReference type="KEGG" id="tth:TT_C1550"/>
<dbReference type="eggNOG" id="COG0119">
    <property type="taxonomic scope" value="Bacteria"/>
</dbReference>
<dbReference type="HOGENOM" id="CLU_022158_2_2_0"/>
<dbReference type="OrthoDB" id="9804858at2"/>
<dbReference type="BioCyc" id="MetaCyc:MONOMER-6722"/>
<dbReference type="SABIO-RK" id="O87198"/>
<dbReference type="UniPathway" id="UPA00033">
    <property type="reaction ID" value="UER00028"/>
</dbReference>
<dbReference type="EvolutionaryTrace" id="O87198"/>
<dbReference type="PRO" id="PR:O87198"/>
<dbReference type="Proteomes" id="UP000000592">
    <property type="component" value="Chromosome"/>
</dbReference>
<dbReference type="GO" id="GO:0005737">
    <property type="term" value="C:cytoplasm"/>
    <property type="evidence" value="ECO:0007669"/>
    <property type="project" value="UniProtKB-SubCell"/>
</dbReference>
<dbReference type="GO" id="GO:0036440">
    <property type="term" value="F:citrate synthase activity"/>
    <property type="evidence" value="ECO:0007669"/>
    <property type="project" value="RHEA"/>
</dbReference>
<dbReference type="GO" id="GO:0004410">
    <property type="term" value="F:homocitrate synthase activity"/>
    <property type="evidence" value="ECO:0007669"/>
    <property type="project" value="UniProtKB-UniRule"/>
</dbReference>
<dbReference type="GO" id="GO:0046872">
    <property type="term" value="F:metal ion binding"/>
    <property type="evidence" value="ECO:0007669"/>
    <property type="project" value="UniProtKB-KW"/>
</dbReference>
<dbReference type="GO" id="GO:0019878">
    <property type="term" value="P:lysine biosynthetic process via aminoadipic acid"/>
    <property type="evidence" value="ECO:0007669"/>
    <property type="project" value="UniProtKB-UniRule"/>
</dbReference>
<dbReference type="CDD" id="cd07948">
    <property type="entry name" value="DRE_TIM_HCS"/>
    <property type="match status" value="1"/>
</dbReference>
<dbReference type="Gene3D" id="1.10.238.260">
    <property type="match status" value="1"/>
</dbReference>
<dbReference type="Gene3D" id="3.20.20.70">
    <property type="entry name" value="Aldolase class I"/>
    <property type="match status" value="1"/>
</dbReference>
<dbReference type="HAMAP" id="MF_02222">
    <property type="entry name" value="Homocitr_synth_fung_arch"/>
    <property type="match status" value="1"/>
</dbReference>
<dbReference type="InterPro" id="IPR050073">
    <property type="entry name" value="2-IPM_HCS-like"/>
</dbReference>
<dbReference type="InterPro" id="IPR002034">
    <property type="entry name" value="AIPM/Hcit_synth_CS"/>
</dbReference>
<dbReference type="InterPro" id="IPR013785">
    <property type="entry name" value="Aldolase_TIM"/>
</dbReference>
<dbReference type="InterPro" id="IPR048253">
    <property type="entry name" value="DRE_TIM_HCS_fun_bact"/>
</dbReference>
<dbReference type="InterPro" id="IPR011872">
    <property type="entry name" value="Homocitrate_synth"/>
</dbReference>
<dbReference type="InterPro" id="IPR054691">
    <property type="entry name" value="LeuA/HCS_post-cat"/>
</dbReference>
<dbReference type="InterPro" id="IPR000891">
    <property type="entry name" value="PYR_CT"/>
</dbReference>
<dbReference type="NCBIfam" id="TIGR02146">
    <property type="entry name" value="LysS_fung_arch"/>
    <property type="match status" value="1"/>
</dbReference>
<dbReference type="PANTHER" id="PTHR10277:SF48">
    <property type="entry name" value="HOMOCITRATE SYNTHASE, CYTOSOLIC ISOZYME-RELATED"/>
    <property type="match status" value="1"/>
</dbReference>
<dbReference type="PANTHER" id="PTHR10277">
    <property type="entry name" value="HOMOCITRATE SYNTHASE-RELATED"/>
    <property type="match status" value="1"/>
</dbReference>
<dbReference type="Pfam" id="PF22617">
    <property type="entry name" value="HCS_D2"/>
    <property type="match status" value="1"/>
</dbReference>
<dbReference type="Pfam" id="PF00682">
    <property type="entry name" value="HMGL-like"/>
    <property type="match status" value="1"/>
</dbReference>
<dbReference type="SUPFAM" id="SSF51569">
    <property type="entry name" value="Aldolase"/>
    <property type="match status" value="1"/>
</dbReference>
<dbReference type="PROSITE" id="PS00815">
    <property type="entry name" value="AIPM_HOMOCIT_SYNTH_1"/>
    <property type="match status" value="1"/>
</dbReference>
<dbReference type="PROSITE" id="PS00816">
    <property type="entry name" value="AIPM_HOMOCIT_SYNTH_2"/>
    <property type="match status" value="1"/>
</dbReference>
<dbReference type="PROSITE" id="PS50991">
    <property type="entry name" value="PYR_CT"/>
    <property type="match status" value="1"/>
</dbReference>
<name>HOSA_THET2</name>
<keyword id="KW-0002">3D-structure</keyword>
<keyword id="KW-0028">Amino-acid biosynthesis</keyword>
<keyword id="KW-0963">Cytoplasm</keyword>
<keyword id="KW-0457">Lysine biosynthesis</keyword>
<keyword id="KW-0460">Magnesium</keyword>
<keyword id="KW-0464">Manganese</keyword>
<keyword id="KW-0479">Metal-binding</keyword>
<keyword id="KW-0808">Transferase</keyword>
<comment type="function">
    <text evidence="3 4 5">Catalyzes the aldol-type condensation of 2-oxoglutarate with acetyl-CoA to yield homocitrate (PubMed:12095615, PubMed:19996101). Carries out the first step of the alpha-aminoadipate (AAA) lysine biosynthesis pathway (PubMed:9868782). To a lesser extent, can also use oxaloacetate in place of 2-oxoglutarate, leading to citrate. Does not display 2-isopropylmalate synthase activity since it cannot use 2-oxoisovalerate (PubMed:12095615).</text>
</comment>
<comment type="catalytic activity">
    <reaction evidence="4">
        <text>acetyl-CoA + 2-oxoglutarate + H2O = (2R)-homocitrate + CoA + H(+)</text>
        <dbReference type="Rhea" id="RHEA:12929"/>
        <dbReference type="ChEBI" id="CHEBI:15377"/>
        <dbReference type="ChEBI" id="CHEBI:15378"/>
        <dbReference type="ChEBI" id="CHEBI:16810"/>
        <dbReference type="ChEBI" id="CHEBI:57287"/>
        <dbReference type="ChEBI" id="CHEBI:57288"/>
        <dbReference type="ChEBI" id="CHEBI:58884"/>
        <dbReference type="EC" id="2.3.3.14"/>
    </reaction>
    <physiologicalReaction direction="left-to-right" evidence="9">
        <dbReference type="Rhea" id="RHEA:12930"/>
    </physiologicalReaction>
</comment>
<comment type="catalytic activity">
    <reaction evidence="3">
        <text>oxaloacetate + acetyl-CoA + H2O = citrate + CoA + H(+)</text>
        <dbReference type="Rhea" id="RHEA:16845"/>
        <dbReference type="ChEBI" id="CHEBI:15377"/>
        <dbReference type="ChEBI" id="CHEBI:15378"/>
        <dbReference type="ChEBI" id="CHEBI:16452"/>
        <dbReference type="ChEBI" id="CHEBI:16947"/>
        <dbReference type="ChEBI" id="CHEBI:57287"/>
        <dbReference type="ChEBI" id="CHEBI:57288"/>
    </reaction>
</comment>
<comment type="cofactor">
    <cofactor evidence="4">
        <name>Mg(2+)</name>
        <dbReference type="ChEBI" id="CHEBI:18420"/>
    </cofactor>
    <cofactor evidence="4">
        <name>Mn(2+)</name>
        <dbReference type="ChEBI" id="CHEBI:29035"/>
    </cofactor>
</comment>
<comment type="activity regulation">
    <text evidence="3 4">Is highly and competitively inhibited by lysine that binds to the active site and competes with 2-oxoglutarate (PubMed:12095615, PubMed:19996101). Is also slightly inhibited by arginine and 2-aminoethylcysteine (PubMed:12095615).</text>
</comment>
<comment type="biophysicochemical properties">
    <kinetics>
        <KM evidence="3">44 uM for 2-oxoglutarate</KM>
        <KM evidence="3">32 uM for acetyl-CoA (in the presence of 2-oxoglutarate)</KM>
        <KM evidence="3">255 uM for oxaloacetate (in the presence of KCl, necessary for activity)</KM>
        <KM evidence="3">28 uM for acetyl-CoA (in the presence of oxaloacetate and KCl)</KM>
        <KM evidence="4">5.4 uM for 2-oxoglutarate</KM>
        <KM evidence="4">33 uM for acetyl-CoA</KM>
        <text evidence="3 4">kcat is 92 min(-1) using 2-oxoglutarate as substrate (PubMed:12095615). kcat is 58 min(-1) using oxaloacetate as substrate (in the presence of KCl, necessary for activity) (PubMed:12095615). kcat is 41 min(-1) using 2-oxoglutarate as substrate (PubMed:19996101).</text>
    </kinetics>
    <temperatureDependence>
        <text evidence="3">Optimum temperature is 60 degrees Celsius. Activity is rapidly lost above 70 degrees Celsius.</text>
    </temperatureDependence>
</comment>
<comment type="pathway">
    <text evidence="5 9">Amino-acid biosynthesis; L-lysine biosynthesis via AAA pathway; L-alpha-aminoadipate from 2-oxoglutarate: step 1/5.</text>
</comment>
<comment type="subunit">
    <text evidence="3">Exists in an equilibrium between monomer and homodimer.</text>
</comment>
<comment type="subcellular location">
    <subcellularLocation>
        <location evidence="8">Cytoplasm</location>
    </subcellularLocation>
</comment>
<comment type="disruption phenotype">
    <text evidence="5">Cells lacking this gene show lysine auxotrophy, which can be complemented with alpha-aminoadipate but not with diaminopimelate.</text>
</comment>
<comment type="similarity">
    <text evidence="1 8">Belongs to the alpha-IPM synthase/homocitrate synthase family. Homocitrate synthase LYS20/LYS21 subfamily.</text>
</comment>
<organism>
    <name type="scientific">Thermus thermophilus (strain ATCC BAA-163 / DSM 7039 / HB27)</name>
    <dbReference type="NCBI Taxonomy" id="262724"/>
    <lineage>
        <taxon>Bacteria</taxon>
        <taxon>Thermotogati</taxon>
        <taxon>Deinococcota</taxon>
        <taxon>Deinococci</taxon>
        <taxon>Thermales</taxon>
        <taxon>Thermaceae</taxon>
        <taxon>Thermus</taxon>
    </lineage>
</organism>
<sequence>MREWKIIDSTLREGEQFEKANFSTQDKVEIAKALDEFGIEYIEVTTPVASPQSRKDAEVLASLGLKAKVVTHIQCRLDAAKVAVETGVQGIDLLFGTSKYLRAAHGRDIPRIIEEAKEVIAYIREAAPHVEVRFSAEDTFRSEEQDLLAVYEAVAPYVDRVGLADTVGVATPRQVYALVREVRRVVGPRVDIEFHGHNDTGCAIANAYEAIEAGATHVDTTILGIGERNGITPLGGFLARMYTLQPEYVRRKYKLEMLPELDRMVARMVGVEIPFNNYITGETAFSHKAGMHLKAIYINPEAYEPYPPEVFGVKRKLIIASRLTGRHAIKARAEELGLHYGEEELHRVTQHIKALADRGQLTLEELDRILREWITA</sequence>
<evidence type="ECO:0000255" key="1">
    <source>
        <dbReference type="HAMAP-Rule" id="MF_02222"/>
    </source>
</evidence>
<evidence type="ECO:0000255" key="2">
    <source>
        <dbReference type="PROSITE-ProRule" id="PRU01151"/>
    </source>
</evidence>
<evidence type="ECO:0000269" key="3">
    <source>
    </source>
</evidence>
<evidence type="ECO:0000269" key="4">
    <source>
    </source>
</evidence>
<evidence type="ECO:0000269" key="5">
    <source>
    </source>
</evidence>
<evidence type="ECO:0000303" key="6">
    <source>
    </source>
</evidence>
<evidence type="ECO:0000303" key="7">
    <source>
    </source>
</evidence>
<evidence type="ECO:0000305" key="8"/>
<evidence type="ECO:0000305" key="9">
    <source>
    </source>
</evidence>
<evidence type="ECO:0007744" key="10">
    <source>
        <dbReference type="PDB" id="2ZTJ"/>
    </source>
</evidence>
<evidence type="ECO:0007744" key="11">
    <source>
        <dbReference type="PDB" id="2ZTK"/>
    </source>
</evidence>
<evidence type="ECO:0007744" key="12">
    <source>
        <dbReference type="PDB" id="2ZYF"/>
    </source>
</evidence>
<evidence type="ECO:0007744" key="13">
    <source>
        <dbReference type="PDB" id="3A9I"/>
    </source>
</evidence>
<evidence type="ECO:0007829" key="14">
    <source>
        <dbReference type="PDB" id="2ZTJ"/>
    </source>
</evidence>
<evidence type="ECO:0007829" key="15">
    <source>
        <dbReference type="PDB" id="2ZYF"/>
    </source>
</evidence>
<evidence type="ECO:0007829" key="16">
    <source>
        <dbReference type="PDB" id="3A9I"/>
    </source>
</evidence>